<sequence>MPADYTSTARALSLPMSPAESLSPAEEDTQPLWSHLASSRRNTASPSARESTGLRDQVVNQATKMLRRTKKTWRRLTFWQRIGAIGAALLAILLGLAFMIFTGQVFFWLGPVAEKWEQSWLAFFVLWLCVFFVSFPPLVGWSTFGTIAGFIFGIWKGWILYATATVLGSTCSFIVSRTILSKFVNRMMERDKRFAALALTLKYDGLKLLCMIRLCPLPYSVCNGAVSTFPTVHPLMYGLATALITPKLLVPAFIGSRIRILSEKNEEMSAGSKAVNICSIILTIGIGIFTGWYIYRRTLARAKELEAKERADIRRSLQADHAAHHPHGSFSEDPDVNTAATTLARDEEERIGFNDFDDDNVDLVIDDESGSENSPNLTKKQFQGPYRDEFTDNDSDVFGDGDGPDSQMFRLHTHVRSG</sequence>
<proteinExistence type="inferred from homology"/>
<protein>
    <recommendedName>
        <fullName>Golgi apparatus membrane protein tvp38</fullName>
    </recommendedName>
</protein>
<evidence type="ECO:0000250" key="1">
    <source>
        <dbReference type="UniProtKB" id="P36164"/>
    </source>
</evidence>
<evidence type="ECO:0000255" key="2"/>
<evidence type="ECO:0000256" key="3">
    <source>
        <dbReference type="SAM" id="MobiDB-lite"/>
    </source>
</evidence>
<evidence type="ECO:0000305" key="4"/>
<accession>A1CW44</accession>
<reference key="1">
    <citation type="journal article" date="2008" name="PLoS Genet.">
        <title>Genomic islands in the pathogenic filamentous fungus Aspergillus fumigatus.</title>
        <authorList>
            <person name="Fedorova N.D."/>
            <person name="Khaldi N."/>
            <person name="Joardar V.S."/>
            <person name="Maiti R."/>
            <person name="Amedeo P."/>
            <person name="Anderson M.J."/>
            <person name="Crabtree J."/>
            <person name="Silva J.C."/>
            <person name="Badger J.H."/>
            <person name="Albarraq A."/>
            <person name="Angiuoli S."/>
            <person name="Bussey H."/>
            <person name="Bowyer P."/>
            <person name="Cotty P.J."/>
            <person name="Dyer P.S."/>
            <person name="Egan A."/>
            <person name="Galens K."/>
            <person name="Fraser-Liggett C.M."/>
            <person name="Haas B.J."/>
            <person name="Inman J.M."/>
            <person name="Kent R."/>
            <person name="Lemieux S."/>
            <person name="Malavazi I."/>
            <person name="Orvis J."/>
            <person name="Roemer T."/>
            <person name="Ronning C.M."/>
            <person name="Sundaram J.P."/>
            <person name="Sutton G."/>
            <person name="Turner G."/>
            <person name="Venter J.C."/>
            <person name="White O.R."/>
            <person name="Whitty B.R."/>
            <person name="Youngman P."/>
            <person name="Wolfe K.H."/>
            <person name="Goldman G.H."/>
            <person name="Wortman J.R."/>
            <person name="Jiang B."/>
            <person name="Denning D.W."/>
            <person name="Nierman W.C."/>
        </authorList>
    </citation>
    <scope>NUCLEOTIDE SEQUENCE [LARGE SCALE GENOMIC DNA]</scope>
    <source>
        <strain>ATCC 1020 / DSM 3700 / CBS 544.65 / FGSC A1164 / JCM 1740 / NRRL 181 / WB 181</strain>
    </source>
</reference>
<comment type="function">
    <text>Golgi membrane protein involved in vesicular trafficking and spindle migration.</text>
</comment>
<comment type="subcellular location">
    <subcellularLocation>
        <location>Golgi apparatus membrane</location>
        <topology>Multi-pass membrane protein</topology>
    </subcellularLocation>
</comment>
<comment type="domain">
    <text evidence="1">The VTT domain was previously called the SNARE-assoc domain. As there is no evidence that this domain associates with SNARE proteins, it was renamed as VMP1, TMEM41, and TVP38 (VTT) domain.</text>
</comment>
<comment type="similarity">
    <text evidence="4">Belongs to the TVP38/TMEM64 family.</text>
</comment>
<feature type="chain" id="PRO_0000343071" description="Golgi apparatus membrane protein tvp38">
    <location>
        <begin position="1"/>
        <end position="418"/>
    </location>
</feature>
<feature type="topological domain" description="Lumenal" evidence="2">
    <location>
        <begin position="1"/>
        <end position="81"/>
    </location>
</feature>
<feature type="transmembrane region" description="Helical" evidence="2">
    <location>
        <begin position="82"/>
        <end position="102"/>
    </location>
</feature>
<feature type="topological domain" description="Cytoplasmic" evidence="2">
    <location>
        <begin position="103"/>
        <end position="119"/>
    </location>
</feature>
<feature type="transmembrane region" description="Helical" evidence="2">
    <location>
        <begin position="120"/>
        <end position="140"/>
    </location>
</feature>
<feature type="topological domain" description="Lumenal" evidence="2">
    <location>
        <begin position="141"/>
        <end position="157"/>
    </location>
</feature>
<feature type="transmembrane region" description="Helical" evidence="2">
    <location>
        <begin position="158"/>
        <end position="180"/>
    </location>
</feature>
<feature type="topological domain" description="Cytoplasmic" evidence="2">
    <location>
        <begin position="181"/>
        <end position="234"/>
    </location>
</feature>
<feature type="transmembrane region" description="Helical" evidence="2">
    <location>
        <begin position="235"/>
        <end position="255"/>
    </location>
</feature>
<feature type="topological domain" description="Lumenal" evidence="2">
    <location>
        <begin position="256"/>
        <end position="273"/>
    </location>
</feature>
<feature type="transmembrane region" description="Helical" evidence="2">
    <location>
        <begin position="274"/>
        <end position="294"/>
    </location>
</feature>
<feature type="topological domain" description="Cytoplasmic" evidence="2">
    <location>
        <begin position="295"/>
        <end position="418"/>
    </location>
</feature>
<feature type="region of interest" description="Disordered" evidence="3">
    <location>
        <begin position="1"/>
        <end position="25"/>
    </location>
</feature>
<feature type="region of interest" description="VTT domain" evidence="1">
    <location>
        <begin position="149"/>
        <end position="258"/>
    </location>
</feature>
<feature type="region of interest" description="Disordered" evidence="3">
    <location>
        <begin position="362"/>
        <end position="408"/>
    </location>
</feature>
<feature type="compositionally biased region" description="Polar residues" evidence="3">
    <location>
        <begin position="1"/>
        <end position="10"/>
    </location>
</feature>
<feature type="compositionally biased region" description="Polar residues" evidence="3">
    <location>
        <begin position="371"/>
        <end position="381"/>
    </location>
</feature>
<feature type="compositionally biased region" description="Acidic residues" evidence="3">
    <location>
        <begin position="391"/>
        <end position="403"/>
    </location>
</feature>
<organism>
    <name type="scientific">Neosartorya fischeri (strain ATCC 1020 / DSM 3700 / CBS 544.65 / FGSC A1164 / JCM 1740 / NRRL 181 / WB 181)</name>
    <name type="common">Aspergillus fischerianus</name>
    <dbReference type="NCBI Taxonomy" id="331117"/>
    <lineage>
        <taxon>Eukaryota</taxon>
        <taxon>Fungi</taxon>
        <taxon>Dikarya</taxon>
        <taxon>Ascomycota</taxon>
        <taxon>Pezizomycotina</taxon>
        <taxon>Eurotiomycetes</taxon>
        <taxon>Eurotiomycetidae</taxon>
        <taxon>Eurotiales</taxon>
        <taxon>Aspergillaceae</taxon>
        <taxon>Aspergillus</taxon>
        <taxon>Aspergillus subgen. Fumigati</taxon>
    </lineage>
</organism>
<name>TVP38_NEOFI</name>
<dbReference type="EMBL" id="DS027685">
    <property type="protein sequence ID" value="EAW24846.1"/>
    <property type="molecule type" value="Genomic_DNA"/>
</dbReference>
<dbReference type="RefSeq" id="XP_001266743.1">
    <property type="nucleotide sequence ID" value="XM_001266742.1"/>
</dbReference>
<dbReference type="STRING" id="331117.A1CW44"/>
<dbReference type="EnsemblFungi" id="EAW24846">
    <property type="protein sequence ID" value="EAW24846"/>
    <property type="gene ID" value="NFIA_103340"/>
</dbReference>
<dbReference type="GeneID" id="4593262"/>
<dbReference type="KEGG" id="nfi:NFIA_103340"/>
<dbReference type="VEuPathDB" id="FungiDB:NFIA_103340"/>
<dbReference type="eggNOG" id="KOG3140">
    <property type="taxonomic scope" value="Eukaryota"/>
</dbReference>
<dbReference type="HOGENOM" id="CLU_041954_0_0_1"/>
<dbReference type="OMA" id="YHDEFTD"/>
<dbReference type="OrthoDB" id="166803at2759"/>
<dbReference type="Proteomes" id="UP000006702">
    <property type="component" value="Unassembled WGS sequence"/>
</dbReference>
<dbReference type="GO" id="GO:0000139">
    <property type="term" value="C:Golgi membrane"/>
    <property type="evidence" value="ECO:0007669"/>
    <property type="project" value="UniProtKB-SubCell"/>
</dbReference>
<dbReference type="GO" id="GO:0000022">
    <property type="term" value="P:mitotic spindle elongation"/>
    <property type="evidence" value="ECO:0007669"/>
    <property type="project" value="TreeGrafter"/>
</dbReference>
<dbReference type="GO" id="GO:0016192">
    <property type="term" value="P:vesicle-mediated transport"/>
    <property type="evidence" value="ECO:0007669"/>
    <property type="project" value="TreeGrafter"/>
</dbReference>
<dbReference type="InterPro" id="IPR051076">
    <property type="entry name" value="Golgi_membrane_TVP38/TMEM64"/>
</dbReference>
<dbReference type="InterPro" id="IPR032816">
    <property type="entry name" value="VTT_dom"/>
</dbReference>
<dbReference type="PANTHER" id="PTHR47549:SF1">
    <property type="entry name" value="GOLGI APPARATUS MEMBRANE PROTEIN TVP38"/>
    <property type="match status" value="1"/>
</dbReference>
<dbReference type="PANTHER" id="PTHR47549">
    <property type="entry name" value="GOLGI APPARATUS MEMBRANE PROTEIN TVP38-RELATED"/>
    <property type="match status" value="1"/>
</dbReference>
<dbReference type="Pfam" id="PF09335">
    <property type="entry name" value="VTT_dom"/>
    <property type="match status" value="1"/>
</dbReference>
<gene>
    <name type="primary">tvp38</name>
    <name type="ORF">NFIA_103340</name>
</gene>
<keyword id="KW-0333">Golgi apparatus</keyword>
<keyword id="KW-0472">Membrane</keyword>
<keyword id="KW-1185">Reference proteome</keyword>
<keyword id="KW-0812">Transmembrane</keyword>
<keyword id="KW-1133">Transmembrane helix</keyword>